<sequence length="104" mass="11819">MDDTSRDPAITEDEIRALQFSAGDVAEIEQTILSFVDACHTRKVAMVVGSTINTLKDRDGKRWGNLPDIYCAYLIRCLVFRGELVGYGDLFRMRYSEIKRPVTL</sequence>
<reference key="1">
    <citation type="journal article" date="1995" name="Nucleic Acids Res.">
        <title>Analysis of the Escherichia coli genome VI: DNA sequence of the region from 92.8 through 100 minutes.</title>
        <authorList>
            <person name="Burland V.D."/>
            <person name="Plunkett G. III"/>
            <person name="Sofia H.J."/>
            <person name="Daniels D.L."/>
            <person name="Blattner F.R."/>
        </authorList>
    </citation>
    <scope>NUCLEOTIDE SEQUENCE [LARGE SCALE GENOMIC DNA]</scope>
    <source>
        <strain>K12 / MG1655 / ATCC 47076</strain>
    </source>
</reference>
<reference key="2">
    <citation type="journal article" date="1997" name="Science">
        <title>The complete genome sequence of Escherichia coli K-12.</title>
        <authorList>
            <person name="Blattner F.R."/>
            <person name="Plunkett G. III"/>
            <person name="Bloch C.A."/>
            <person name="Perna N.T."/>
            <person name="Burland V."/>
            <person name="Riley M."/>
            <person name="Collado-Vides J."/>
            <person name="Glasner J.D."/>
            <person name="Rode C.K."/>
            <person name="Mayhew G.F."/>
            <person name="Gregor J."/>
            <person name="Davis N.W."/>
            <person name="Kirkpatrick H.A."/>
            <person name="Goeden M.A."/>
            <person name="Rose D.J."/>
            <person name="Mau B."/>
            <person name="Shao Y."/>
        </authorList>
    </citation>
    <scope>NUCLEOTIDE SEQUENCE [LARGE SCALE GENOMIC DNA]</scope>
    <source>
        <strain>K12 / MG1655 / ATCC 47076</strain>
    </source>
</reference>
<reference key="3">
    <citation type="journal article" date="2006" name="Mol. Syst. Biol.">
        <title>Highly accurate genome sequences of Escherichia coli K-12 strains MG1655 and W3110.</title>
        <authorList>
            <person name="Hayashi K."/>
            <person name="Morooka N."/>
            <person name="Yamamoto Y."/>
            <person name="Fujita K."/>
            <person name="Isono K."/>
            <person name="Choi S."/>
            <person name="Ohtsubo E."/>
            <person name="Baba T."/>
            <person name="Wanner B.L."/>
            <person name="Mori H."/>
            <person name="Horiuchi T."/>
        </authorList>
    </citation>
    <scope>NUCLEOTIDE SEQUENCE [LARGE SCALE GENOMIC DNA]</scope>
    <source>
        <strain>K12 / W3110 / ATCC 27325 / DSM 5911</strain>
    </source>
</reference>
<name>YJEN_ECOLI</name>
<gene>
    <name type="primary">yjeN</name>
    <name type="ordered locus">b4157</name>
    <name type="ordered locus">JW4118</name>
</gene>
<keyword id="KW-1185">Reference proteome</keyword>
<proteinExistence type="predicted"/>
<feature type="chain" id="PRO_0000169740" description="Uncharacterized protein YjeN">
    <location>
        <begin position="1"/>
        <end position="104"/>
    </location>
</feature>
<accession>P39283</accession>
<accession>Q2M6E5</accession>
<protein>
    <recommendedName>
        <fullName>Uncharacterized protein YjeN</fullName>
    </recommendedName>
</protein>
<dbReference type="EMBL" id="U14003">
    <property type="protein sequence ID" value="AAA97056.1"/>
    <property type="molecule type" value="Genomic_DNA"/>
</dbReference>
<dbReference type="EMBL" id="U00096">
    <property type="protein sequence ID" value="AAC77117.1"/>
    <property type="molecule type" value="Genomic_DNA"/>
</dbReference>
<dbReference type="EMBL" id="AP009048">
    <property type="protein sequence ID" value="BAE78161.1"/>
    <property type="molecule type" value="Genomic_DNA"/>
</dbReference>
<dbReference type="PIR" id="S56385">
    <property type="entry name" value="S56385"/>
</dbReference>
<dbReference type="RefSeq" id="NP_418581.1">
    <property type="nucleotide sequence ID" value="NC_000913.3"/>
</dbReference>
<dbReference type="RefSeq" id="WP_000342867.1">
    <property type="nucleotide sequence ID" value="NZ_STEB01000014.1"/>
</dbReference>
<dbReference type="BioGRID" id="4259461">
    <property type="interactions" value="17"/>
</dbReference>
<dbReference type="FunCoup" id="P39283">
    <property type="interactions" value="216"/>
</dbReference>
<dbReference type="IntAct" id="P39283">
    <property type="interactions" value="5"/>
</dbReference>
<dbReference type="STRING" id="511145.b4157"/>
<dbReference type="PaxDb" id="511145-b4157"/>
<dbReference type="EnsemblBacteria" id="AAC77117">
    <property type="protein sequence ID" value="AAC77117"/>
    <property type="gene ID" value="b4157"/>
</dbReference>
<dbReference type="GeneID" id="948678"/>
<dbReference type="KEGG" id="ecj:JW4118"/>
<dbReference type="KEGG" id="eco:b4157"/>
<dbReference type="KEGG" id="ecoc:C3026_22470"/>
<dbReference type="PATRIC" id="fig|511145.12.peg.4291"/>
<dbReference type="EchoBASE" id="EB2369"/>
<dbReference type="eggNOG" id="ENOG50340QY">
    <property type="taxonomic scope" value="Bacteria"/>
</dbReference>
<dbReference type="HOGENOM" id="CLU_2232453_0_0_6"/>
<dbReference type="InParanoid" id="P39283"/>
<dbReference type="OrthoDB" id="7032026at2"/>
<dbReference type="BioCyc" id="EcoCyc:G7838-MONOMER"/>
<dbReference type="PRO" id="PR:P39283"/>
<dbReference type="Proteomes" id="UP000000625">
    <property type="component" value="Chromosome"/>
</dbReference>
<organism>
    <name type="scientific">Escherichia coli (strain K12)</name>
    <dbReference type="NCBI Taxonomy" id="83333"/>
    <lineage>
        <taxon>Bacteria</taxon>
        <taxon>Pseudomonadati</taxon>
        <taxon>Pseudomonadota</taxon>
        <taxon>Gammaproteobacteria</taxon>
        <taxon>Enterobacterales</taxon>
        <taxon>Enterobacteriaceae</taxon>
        <taxon>Escherichia</taxon>
    </lineage>
</organism>